<feature type="chain" id="PRO_1000214962" description="Large ribosomal subunit protein uL13">
    <location>
        <begin position="1"/>
        <end position="147"/>
    </location>
</feature>
<gene>
    <name evidence="1" type="primary">rplM</name>
    <name type="ordered locus">RER_19040</name>
</gene>
<sequence>MSTYTPKAGDVTHSWHVIDATDVVLGRLAVQAANLLRGKHKPTYAPHIDGGDFVVIINAEKVAISGNKLQGKNVYHHSGFPGGLKSRTVGEVLDRTPDRLVEKAIVGMLPKTKLGRAMSSKLKVYAGPNHPHTAQQPVPFEIKQVAQ</sequence>
<name>RL13_RHOE4</name>
<organism>
    <name type="scientific">Rhodococcus erythropolis (strain PR4 / NBRC 100887)</name>
    <dbReference type="NCBI Taxonomy" id="234621"/>
    <lineage>
        <taxon>Bacteria</taxon>
        <taxon>Bacillati</taxon>
        <taxon>Actinomycetota</taxon>
        <taxon>Actinomycetes</taxon>
        <taxon>Mycobacteriales</taxon>
        <taxon>Nocardiaceae</taxon>
        <taxon>Rhodococcus</taxon>
        <taxon>Rhodococcus erythropolis group</taxon>
    </lineage>
</organism>
<protein>
    <recommendedName>
        <fullName evidence="1">Large ribosomal subunit protein uL13</fullName>
    </recommendedName>
    <alternativeName>
        <fullName evidence="2">50S ribosomal protein L13</fullName>
    </alternativeName>
</protein>
<reference key="1">
    <citation type="submission" date="2005-03" db="EMBL/GenBank/DDBJ databases">
        <title>Comparison of the complete genome sequences of Rhodococcus erythropolis PR4 and Rhodococcus opacus B4.</title>
        <authorList>
            <person name="Takarada H."/>
            <person name="Sekine M."/>
            <person name="Hosoyama A."/>
            <person name="Yamada R."/>
            <person name="Fujisawa T."/>
            <person name="Omata S."/>
            <person name="Shimizu A."/>
            <person name="Tsukatani N."/>
            <person name="Tanikawa S."/>
            <person name="Fujita N."/>
            <person name="Harayama S."/>
        </authorList>
    </citation>
    <scope>NUCLEOTIDE SEQUENCE [LARGE SCALE GENOMIC DNA]</scope>
    <source>
        <strain>PR4 / NBRC 100887</strain>
    </source>
</reference>
<comment type="function">
    <text evidence="1">This protein is one of the early assembly proteins of the 50S ribosomal subunit, although it is not seen to bind rRNA by itself. It is important during the early stages of 50S assembly.</text>
</comment>
<comment type="subunit">
    <text evidence="1">Part of the 50S ribosomal subunit.</text>
</comment>
<comment type="similarity">
    <text evidence="1">Belongs to the universal ribosomal protein uL13 family.</text>
</comment>
<keyword id="KW-0687">Ribonucleoprotein</keyword>
<keyword id="KW-0689">Ribosomal protein</keyword>
<dbReference type="EMBL" id="AP008957">
    <property type="protein sequence ID" value="BAH32612.1"/>
    <property type="molecule type" value="Genomic_DNA"/>
</dbReference>
<dbReference type="RefSeq" id="WP_019747566.1">
    <property type="nucleotide sequence ID" value="NC_012490.1"/>
</dbReference>
<dbReference type="SMR" id="C0ZW77"/>
<dbReference type="GeneID" id="57487968"/>
<dbReference type="KEGG" id="rer:RER_19040"/>
<dbReference type="eggNOG" id="COG0102">
    <property type="taxonomic scope" value="Bacteria"/>
</dbReference>
<dbReference type="HOGENOM" id="CLU_082184_2_2_11"/>
<dbReference type="Proteomes" id="UP000002204">
    <property type="component" value="Chromosome"/>
</dbReference>
<dbReference type="GO" id="GO:0022625">
    <property type="term" value="C:cytosolic large ribosomal subunit"/>
    <property type="evidence" value="ECO:0007669"/>
    <property type="project" value="TreeGrafter"/>
</dbReference>
<dbReference type="GO" id="GO:0003729">
    <property type="term" value="F:mRNA binding"/>
    <property type="evidence" value="ECO:0007669"/>
    <property type="project" value="TreeGrafter"/>
</dbReference>
<dbReference type="GO" id="GO:0003735">
    <property type="term" value="F:structural constituent of ribosome"/>
    <property type="evidence" value="ECO:0007669"/>
    <property type="project" value="InterPro"/>
</dbReference>
<dbReference type="GO" id="GO:0017148">
    <property type="term" value="P:negative regulation of translation"/>
    <property type="evidence" value="ECO:0007669"/>
    <property type="project" value="TreeGrafter"/>
</dbReference>
<dbReference type="GO" id="GO:0006412">
    <property type="term" value="P:translation"/>
    <property type="evidence" value="ECO:0007669"/>
    <property type="project" value="UniProtKB-UniRule"/>
</dbReference>
<dbReference type="CDD" id="cd00392">
    <property type="entry name" value="Ribosomal_L13"/>
    <property type="match status" value="1"/>
</dbReference>
<dbReference type="FunFam" id="3.90.1180.10:FF:000001">
    <property type="entry name" value="50S ribosomal protein L13"/>
    <property type="match status" value="1"/>
</dbReference>
<dbReference type="Gene3D" id="3.90.1180.10">
    <property type="entry name" value="Ribosomal protein L13"/>
    <property type="match status" value="1"/>
</dbReference>
<dbReference type="HAMAP" id="MF_01366">
    <property type="entry name" value="Ribosomal_uL13"/>
    <property type="match status" value="1"/>
</dbReference>
<dbReference type="InterPro" id="IPR005822">
    <property type="entry name" value="Ribosomal_uL13"/>
</dbReference>
<dbReference type="InterPro" id="IPR005823">
    <property type="entry name" value="Ribosomal_uL13_bac-type"/>
</dbReference>
<dbReference type="InterPro" id="IPR023563">
    <property type="entry name" value="Ribosomal_uL13_CS"/>
</dbReference>
<dbReference type="InterPro" id="IPR036899">
    <property type="entry name" value="Ribosomal_uL13_sf"/>
</dbReference>
<dbReference type="NCBIfam" id="TIGR01066">
    <property type="entry name" value="rplM_bact"/>
    <property type="match status" value="1"/>
</dbReference>
<dbReference type="PANTHER" id="PTHR11545:SF2">
    <property type="entry name" value="LARGE RIBOSOMAL SUBUNIT PROTEIN UL13M"/>
    <property type="match status" value="1"/>
</dbReference>
<dbReference type="PANTHER" id="PTHR11545">
    <property type="entry name" value="RIBOSOMAL PROTEIN L13"/>
    <property type="match status" value="1"/>
</dbReference>
<dbReference type="Pfam" id="PF00572">
    <property type="entry name" value="Ribosomal_L13"/>
    <property type="match status" value="1"/>
</dbReference>
<dbReference type="PIRSF" id="PIRSF002181">
    <property type="entry name" value="Ribosomal_L13"/>
    <property type="match status" value="1"/>
</dbReference>
<dbReference type="SUPFAM" id="SSF52161">
    <property type="entry name" value="Ribosomal protein L13"/>
    <property type="match status" value="1"/>
</dbReference>
<dbReference type="PROSITE" id="PS00783">
    <property type="entry name" value="RIBOSOMAL_L13"/>
    <property type="match status" value="1"/>
</dbReference>
<proteinExistence type="inferred from homology"/>
<accession>C0ZW77</accession>
<evidence type="ECO:0000255" key="1">
    <source>
        <dbReference type="HAMAP-Rule" id="MF_01366"/>
    </source>
</evidence>
<evidence type="ECO:0000305" key="2"/>